<comment type="function">
    <text>This is calcium-dependent, phospholipid-dependent, serine- and threonine-specific enzyme. Activation of PKC by serotonin results in presynaptic facilitation of depressed sensory-to-motor neuron synapses, which is thought to underlie behavioral dishabituation.</text>
</comment>
<comment type="function">
    <text evidence="1">PKC is activated by diacylglycerol which in turn phosphorylates a range of cellular proteins. PKC also serves as the receptor for phorbol esters, a class of tumor promoters (By similarity).</text>
</comment>
<comment type="catalytic activity">
    <reaction>
        <text>L-seryl-[protein] + ATP = O-phospho-L-seryl-[protein] + ADP + H(+)</text>
        <dbReference type="Rhea" id="RHEA:17989"/>
        <dbReference type="Rhea" id="RHEA-COMP:9863"/>
        <dbReference type="Rhea" id="RHEA-COMP:11604"/>
        <dbReference type="ChEBI" id="CHEBI:15378"/>
        <dbReference type="ChEBI" id="CHEBI:29999"/>
        <dbReference type="ChEBI" id="CHEBI:30616"/>
        <dbReference type="ChEBI" id="CHEBI:83421"/>
        <dbReference type="ChEBI" id="CHEBI:456216"/>
        <dbReference type="EC" id="2.7.11.13"/>
    </reaction>
</comment>
<comment type="catalytic activity">
    <reaction>
        <text>L-threonyl-[protein] + ATP = O-phospho-L-threonyl-[protein] + ADP + H(+)</text>
        <dbReference type="Rhea" id="RHEA:46608"/>
        <dbReference type="Rhea" id="RHEA-COMP:11060"/>
        <dbReference type="Rhea" id="RHEA-COMP:11605"/>
        <dbReference type="ChEBI" id="CHEBI:15378"/>
        <dbReference type="ChEBI" id="CHEBI:30013"/>
        <dbReference type="ChEBI" id="CHEBI:30616"/>
        <dbReference type="ChEBI" id="CHEBI:61977"/>
        <dbReference type="ChEBI" id="CHEBI:456216"/>
        <dbReference type="EC" id="2.7.11.13"/>
    </reaction>
</comment>
<comment type="cofactor">
    <cofactor evidence="2">
        <name>Ca(2+)</name>
        <dbReference type="ChEBI" id="CHEBI:29108"/>
    </cofactor>
    <text evidence="2">Binds 3 Ca(2+) ions per C2 domain.</text>
</comment>
<comment type="activity regulation">
    <text>Activated by phosphatidylserine.</text>
</comment>
<comment type="subcellular location">
    <subcellularLocation>
        <location>Cytoplasm</location>
    </subcellularLocation>
    <text>Translocated to neuronal membranes.</text>
</comment>
<comment type="similarity">
    <text evidence="7">Belongs to the protein kinase superfamily. AGC Ser/Thr protein kinase family. PKC subfamily.</text>
</comment>
<sequence length="649" mass="74079">MEKRVARRGALRQKNVHEVKNHKFLARFFKQPTFCSHCKDFIWGFGKQGFQCQVCSLVVHKRCHEFVCFICPGADKGPDSDATNLHKFKLHSYGSPTFCDHCGSLLYGLLHQGLKCDSCDMNVHKRCEKNVPLLCGTDHTERRGRILIKGAVKGSKVLVEILEAKNLCPMDPNGLADPYVKVKLIPYDAHKLKLKTKTIKASLNPVWNESFTVDIGPEDNSKRLSLEVWDWDRTSRNDFMGSLSFGISELIKSPVEGWFKLLNQEEGEFYGVPVTDDITESIQEIKSKMHRSSISSEKRYPEPDKVQNMSKQDIVRASDFNFLTVLGKGSFGKVVLAERKGTDELYAIKILKKDVIIQDDDVECTMIEKRVLALPDKPPFLVQLHSCFQTMDRLYFVMEYVNGGDLMYRIQQEGKFKEPVAAFYAAEIAIGLFYLHTQGIVYRDLKLDNVMLDAEGHIKIADFGMCKENIMGDKTTRTFCGTPDYIAPEIVLYQPYGRSVDWWAYGVLLYEMLAGQPPFDGEDEEELFTSITDHNVSYPKALSREAVSLCKGLLTKTPAKRLGCGPNGERDIKDRAFFRPIQWERIELREVQPPYKPRIKSRKDVSNFDREFTSEAPNVTPTDKLFIMNLDQCEFSGFSYVNPEFVVTV</sequence>
<accession>Q16974</accession>
<protein>
    <recommendedName>
        <fullName>Calcium-dependent protein kinase C</fullName>
        <ecNumber>2.7.11.13</ecNumber>
    </recommendedName>
    <alternativeName>
        <fullName>APL I</fullName>
    </alternativeName>
</protein>
<feature type="chain" id="PRO_0000055727" description="Calcium-dependent protein kinase C">
    <location>
        <begin position="1"/>
        <end position="649"/>
    </location>
</feature>
<feature type="domain" description="C2" evidence="2">
    <location>
        <begin position="138"/>
        <end position="259"/>
    </location>
</feature>
<feature type="domain" description="Protein kinase" evidence="3">
    <location>
        <begin position="320"/>
        <end position="578"/>
    </location>
</feature>
<feature type="domain" description="AGC-kinase C-terminal" evidence="5">
    <location>
        <begin position="579"/>
        <end position="649"/>
    </location>
</feature>
<feature type="zinc finger region" description="Phorbol-ester/DAG-type 1" evidence="4">
    <location>
        <begin position="21"/>
        <end position="71"/>
    </location>
</feature>
<feature type="zinc finger region" description="Phorbol-ester/DAG-type 2" evidence="4">
    <location>
        <begin position="85"/>
        <end position="135"/>
    </location>
</feature>
<feature type="active site" description="Proton acceptor" evidence="3 6">
    <location>
        <position position="444"/>
    </location>
</feature>
<feature type="binding site" evidence="2">
    <location>
        <position position="171"/>
    </location>
    <ligand>
        <name>Ca(2+)</name>
        <dbReference type="ChEBI" id="CHEBI:29108"/>
        <label>1</label>
    </ligand>
</feature>
<feature type="binding site" evidence="2">
    <location>
        <position position="171"/>
    </location>
    <ligand>
        <name>Ca(2+)</name>
        <dbReference type="ChEBI" id="CHEBI:29108"/>
        <label>2</label>
    </ligand>
</feature>
<feature type="binding site" evidence="2">
    <location>
        <position position="177"/>
    </location>
    <ligand>
        <name>Ca(2+)</name>
        <dbReference type="ChEBI" id="CHEBI:29108"/>
        <label>1</label>
    </ligand>
</feature>
<feature type="binding site" evidence="2">
    <location>
        <position position="230"/>
    </location>
    <ligand>
        <name>Ca(2+)</name>
        <dbReference type="ChEBI" id="CHEBI:29108"/>
        <label>1</label>
    </ligand>
</feature>
<feature type="binding site" evidence="2">
    <location>
        <position position="230"/>
    </location>
    <ligand>
        <name>Ca(2+)</name>
        <dbReference type="ChEBI" id="CHEBI:29108"/>
        <label>2</label>
    </ligand>
</feature>
<feature type="binding site" evidence="2">
    <location>
        <position position="232"/>
    </location>
    <ligand>
        <name>Ca(2+)</name>
        <dbReference type="ChEBI" id="CHEBI:29108"/>
        <label>1</label>
    </ligand>
</feature>
<feature type="binding site" evidence="2">
    <location>
        <position position="232"/>
    </location>
    <ligand>
        <name>Ca(2+)</name>
        <dbReference type="ChEBI" id="CHEBI:29108"/>
        <label>2</label>
    </ligand>
</feature>
<feature type="binding site" evidence="2">
    <location>
        <position position="232"/>
    </location>
    <ligand>
        <name>Ca(2+)</name>
        <dbReference type="ChEBI" id="CHEBI:29108"/>
        <label>3</label>
    </ligand>
</feature>
<feature type="binding site" evidence="2">
    <location>
        <position position="235"/>
    </location>
    <ligand>
        <name>Ca(2+)</name>
        <dbReference type="ChEBI" id="CHEBI:29108"/>
        <label>3</label>
    </ligand>
</feature>
<feature type="binding site" evidence="2">
    <location>
        <position position="238"/>
    </location>
    <ligand>
        <name>Ca(2+)</name>
        <dbReference type="ChEBI" id="CHEBI:29108"/>
        <label>2</label>
    </ligand>
</feature>
<feature type="binding site" evidence="2">
    <location>
        <position position="238"/>
    </location>
    <ligand>
        <name>Ca(2+)</name>
        <dbReference type="ChEBI" id="CHEBI:29108"/>
        <label>3</label>
    </ligand>
</feature>
<feature type="binding site" evidence="3">
    <location>
        <begin position="326"/>
        <end position="334"/>
    </location>
    <ligand>
        <name>ATP</name>
        <dbReference type="ChEBI" id="CHEBI:30616"/>
    </ligand>
</feature>
<feature type="binding site" evidence="3">
    <location>
        <position position="349"/>
    </location>
    <ligand>
        <name>ATP</name>
        <dbReference type="ChEBI" id="CHEBI:30616"/>
    </ligand>
</feature>
<proteinExistence type="evidence at protein level"/>
<gene>
    <name type="primary">PRKC1</name>
</gene>
<reference key="1">
    <citation type="journal article" date="1991" name="J. Neurosci.">
        <title>Cloning and characterization of Ca(2+)-dependent and Ca(2+)-independent PKCs expressed in Aplysia sensory cells.</title>
        <authorList>
            <person name="Kruger K.E."/>
            <person name="Sossin W.S."/>
            <person name="Sacktor T.C."/>
            <person name="Bergold P.J."/>
            <person name="Beushausen S."/>
            <person name="Schwartz J.H."/>
        </authorList>
    </citation>
    <scope>NUCLEOTIDE SEQUENCE [MRNA]</scope>
</reference>
<reference key="2">
    <citation type="journal article" date="1993" name="J. Biol. Chem.">
        <title>Characterization of two isoforms of protein kinase C in the nervous system of Aplysia californica.</title>
        <authorList>
            <person name="Sossin W.S."/>
            <person name="Diaz-Arrastia R."/>
            <person name="Schwartz J.H."/>
        </authorList>
    </citation>
    <scope>CHARACTERIZATION</scope>
</reference>
<reference key="3">
    <citation type="journal article" date="1998" name="J. Biol. Chem.">
        <title>The role of C2 domains in Ca2+-activated and Ca2+-independent protein kinase Cs in aplysia.</title>
        <authorList>
            <person name="Pepio A.M."/>
            <person name="Fan X."/>
            <person name="Sossin W.S."/>
        </authorList>
    </citation>
    <scope>CHARACTERIZATION</scope>
</reference>
<reference key="4">
    <citation type="journal article" date="1998" name="J. Biol. Chem.">
        <authorList>
            <person name="Pepio A.M."/>
            <person name="Fan X."/>
            <person name="Sossin W.S."/>
        </authorList>
    </citation>
    <scope>ERRATUM OF PUBMED:9668085</scope>
</reference>
<keyword id="KW-0067">ATP-binding</keyword>
<keyword id="KW-0106">Calcium</keyword>
<keyword id="KW-0963">Cytoplasm</keyword>
<keyword id="KW-0418">Kinase</keyword>
<keyword id="KW-0479">Metal-binding</keyword>
<keyword id="KW-0547">Nucleotide-binding</keyword>
<keyword id="KW-0597">Phosphoprotein</keyword>
<keyword id="KW-0677">Repeat</keyword>
<keyword id="KW-0723">Serine/threonine-protein kinase</keyword>
<keyword id="KW-0808">Transferase</keyword>
<keyword id="KW-0862">Zinc</keyword>
<keyword id="KW-0863">Zinc-finger</keyword>
<evidence type="ECO:0000250" key="1"/>
<evidence type="ECO:0000255" key="2">
    <source>
        <dbReference type="PROSITE-ProRule" id="PRU00041"/>
    </source>
</evidence>
<evidence type="ECO:0000255" key="3">
    <source>
        <dbReference type="PROSITE-ProRule" id="PRU00159"/>
    </source>
</evidence>
<evidence type="ECO:0000255" key="4">
    <source>
        <dbReference type="PROSITE-ProRule" id="PRU00226"/>
    </source>
</evidence>
<evidence type="ECO:0000255" key="5">
    <source>
        <dbReference type="PROSITE-ProRule" id="PRU00618"/>
    </source>
</evidence>
<evidence type="ECO:0000255" key="6">
    <source>
        <dbReference type="PROSITE-ProRule" id="PRU10027"/>
    </source>
</evidence>
<evidence type="ECO:0000305" key="7"/>
<dbReference type="EC" id="2.7.11.13"/>
<dbReference type="EMBL" id="M94883">
    <property type="protein sequence ID" value="AAA27770.2"/>
    <property type="molecule type" value="mRNA"/>
</dbReference>
<dbReference type="RefSeq" id="NP_001191415.1">
    <property type="nucleotide sequence ID" value="NM_001204486.1"/>
</dbReference>
<dbReference type="SMR" id="Q16974"/>
<dbReference type="EnsemblMetazoa" id="NM_001204486.1">
    <property type="protein sequence ID" value="NP_001191415.1"/>
    <property type="gene ID" value="LOC100533518"/>
</dbReference>
<dbReference type="GeneID" id="100533518"/>
<dbReference type="OrthoDB" id="63267at2759"/>
<dbReference type="BRENDA" id="2.7.11.13">
    <property type="organism ID" value="390"/>
</dbReference>
<dbReference type="Proteomes" id="UP000694888">
    <property type="component" value="Unplaced"/>
</dbReference>
<dbReference type="GO" id="GO:0005737">
    <property type="term" value="C:cytoplasm"/>
    <property type="evidence" value="ECO:0007669"/>
    <property type="project" value="UniProtKB-SubCell"/>
</dbReference>
<dbReference type="GO" id="GO:0005524">
    <property type="term" value="F:ATP binding"/>
    <property type="evidence" value="ECO:0007669"/>
    <property type="project" value="UniProtKB-KW"/>
</dbReference>
<dbReference type="GO" id="GO:0004697">
    <property type="term" value="F:diacylglycerol-dependent serine/threonine kinase activity"/>
    <property type="evidence" value="ECO:0007669"/>
    <property type="project" value="UniProtKB-EC"/>
</dbReference>
<dbReference type="GO" id="GO:0106310">
    <property type="term" value="F:protein serine kinase activity"/>
    <property type="evidence" value="ECO:0007669"/>
    <property type="project" value="RHEA"/>
</dbReference>
<dbReference type="GO" id="GO:0008270">
    <property type="term" value="F:zinc ion binding"/>
    <property type="evidence" value="ECO:0007669"/>
    <property type="project" value="UniProtKB-KW"/>
</dbReference>
<dbReference type="CDD" id="cd20833">
    <property type="entry name" value="C1_cPKC_rpt1"/>
    <property type="match status" value="1"/>
</dbReference>
<dbReference type="CDD" id="cd20836">
    <property type="entry name" value="C1_cPKC_rpt2"/>
    <property type="match status" value="1"/>
</dbReference>
<dbReference type="CDD" id="cd04026">
    <property type="entry name" value="C2_PKC_alpha_gamma"/>
    <property type="match status" value="1"/>
</dbReference>
<dbReference type="CDD" id="cd05587">
    <property type="entry name" value="STKc_cPKC"/>
    <property type="match status" value="1"/>
</dbReference>
<dbReference type="FunFam" id="1.10.510.10:FF:000023">
    <property type="entry name" value="Protein kinase C"/>
    <property type="match status" value="1"/>
</dbReference>
<dbReference type="FunFam" id="2.60.40.150:FF:000218">
    <property type="entry name" value="Protein kinase C"/>
    <property type="match status" value="1"/>
</dbReference>
<dbReference type="FunFam" id="3.30.200.20:FF:000080">
    <property type="entry name" value="Protein kinase C"/>
    <property type="match status" value="1"/>
</dbReference>
<dbReference type="FunFam" id="3.30.60.20:FF:000006">
    <property type="entry name" value="Protein kinase C"/>
    <property type="match status" value="1"/>
</dbReference>
<dbReference type="FunFam" id="3.30.60.20:FF:000052">
    <property type="entry name" value="Protein kinase C"/>
    <property type="match status" value="1"/>
</dbReference>
<dbReference type="Gene3D" id="3.30.60.20">
    <property type="match status" value="2"/>
</dbReference>
<dbReference type="Gene3D" id="2.60.40.150">
    <property type="entry name" value="C2 domain"/>
    <property type="match status" value="1"/>
</dbReference>
<dbReference type="Gene3D" id="3.30.200.20">
    <property type="entry name" value="Phosphorylase Kinase, domain 1"/>
    <property type="match status" value="1"/>
</dbReference>
<dbReference type="Gene3D" id="1.10.510.10">
    <property type="entry name" value="Transferase(Phosphotransferase) domain 1"/>
    <property type="match status" value="1"/>
</dbReference>
<dbReference type="InterPro" id="IPR000961">
    <property type="entry name" value="AGC-kinase_C"/>
</dbReference>
<dbReference type="InterPro" id="IPR046349">
    <property type="entry name" value="C1-like_sf"/>
</dbReference>
<dbReference type="InterPro" id="IPR000008">
    <property type="entry name" value="C2_dom"/>
</dbReference>
<dbReference type="InterPro" id="IPR035892">
    <property type="entry name" value="C2_domain_sf"/>
</dbReference>
<dbReference type="InterPro" id="IPR020454">
    <property type="entry name" value="DAG/PE-bd"/>
</dbReference>
<dbReference type="InterPro" id="IPR011009">
    <property type="entry name" value="Kinase-like_dom_sf"/>
</dbReference>
<dbReference type="InterPro" id="IPR002219">
    <property type="entry name" value="PE/DAG-bd"/>
</dbReference>
<dbReference type="InterPro" id="IPR017892">
    <property type="entry name" value="Pkinase_C"/>
</dbReference>
<dbReference type="InterPro" id="IPR000719">
    <property type="entry name" value="Prot_kinase_dom"/>
</dbReference>
<dbReference type="InterPro" id="IPR017441">
    <property type="entry name" value="Protein_kinase_ATP_BS"/>
</dbReference>
<dbReference type="InterPro" id="IPR014375">
    <property type="entry name" value="Protein_kinase_C_a/b/g"/>
</dbReference>
<dbReference type="InterPro" id="IPR008271">
    <property type="entry name" value="Ser/Thr_kinase_AS"/>
</dbReference>
<dbReference type="PANTHER" id="PTHR24351">
    <property type="entry name" value="RIBOSOMAL PROTEIN S6 KINASE"/>
    <property type="match status" value="1"/>
</dbReference>
<dbReference type="Pfam" id="PF00130">
    <property type="entry name" value="C1_1"/>
    <property type="match status" value="2"/>
</dbReference>
<dbReference type="Pfam" id="PF00168">
    <property type="entry name" value="C2"/>
    <property type="match status" value="1"/>
</dbReference>
<dbReference type="Pfam" id="PF00069">
    <property type="entry name" value="Pkinase"/>
    <property type="match status" value="1"/>
</dbReference>
<dbReference type="Pfam" id="PF00433">
    <property type="entry name" value="Pkinase_C"/>
    <property type="match status" value="1"/>
</dbReference>
<dbReference type="PIRSF" id="PIRSF000550">
    <property type="entry name" value="PKC_alpha"/>
    <property type="match status" value="1"/>
</dbReference>
<dbReference type="PRINTS" id="PR00360">
    <property type="entry name" value="C2DOMAIN"/>
</dbReference>
<dbReference type="PRINTS" id="PR00008">
    <property type="entry name" value="DAGPEDOMAIN"/>
</dbReference>
<dbReference type="SMART" id="SM00109">
    <property type="entry name" value="C1"/>
    <property type="match status" value="2"/>
</dbReference>
<dbReference type="SMART" id="SM00239">
    <property type="entry name" value="C2"/>
    <property type="match status" value="1"/>
</dbReference>
<dbReference type="SMART" id="SM00133">
    <property type="entry name" value="S_TK_X"/>
    <property type="match status" value="1"/>
</dbReference>
<dbReference type="SMART" id="SM00220">
    <property type="entry name" value="S_TKc"/>
    <property type="match status" value="1"/>
</dbReference>
<dbReference type="SUPFAM" id="SSF49562">
    <property type="entry name" value="C2 domain (Calcium/lipid-binding domain, CaLB)"/>
    <property type="match status" value="1"/>
</dbReference>
<dbReference type="SUPFAM" id="SSF57889">
    <property type="entry name" value="Cysteine-rich domain"/>
    <property type="match status" value="2"/>
</dbReference>
<dbReference type="SUPFAM" id="SSF56112">
    <property type="entry name" value="Protein kinase-like (PK-like)"/>
    <property type="match status" value="1"/>
</dbReference>
<dbReference type="PROSITE" id="PS51285">
    <property type="entry name" value="AGC_KINASE_CTER"/>
    <property type="match status" value="1"/>
</dbReference>
<dbReference type="PROSITE" id="PS50004">
    <property type="entry name" value="C2"/>
    <property type="match status" value="1"/>
</dbReference>
<dbReference type="PROSITE" id="PS00107">
    <property type="entry name" value="PROTEIN_KINASE_ATP"/>
    <property type="match status" value="1"/>
</dbReference>
<dbReference type="PROSITE" id="PS50011">
    <property type="entry name" value="PROTEIN_KINASE_DOM"/>
    <property type="match status" value="1"/>
</dbReference>
<dbReference type="PROSITE" id="PS00108">
    <property type="entry name" value="PROTEIN_KINASE_ST"/>
    <property type="match status" value="1"/>
</dbReference>
<dbReference type="PROSITE" id="PS00479">
    <property type="entry name" value="ZF_DAG_PE_1"/>
    <property type="match status" value="2"/>
</dbReference>
<dbReference type="PROSITE" id="PS50081">
    <property type="entry name" value="ZF_DAG_PE_2"/>
    <property type="match status" value="2"/>
</dbReference>
<organism>
    <name type="scientific">Aplysia californica</name>
    <name type="common">California sea hare</name>
    <dbReference type="NCBI Taxonomy" id="6500"/>
    <lineage>
        <taxon>Eukaryota</taxon>
        <taxon>Metazoa</taxon>
        <taxon>Spiralia</taxon>
        <taxon>Lophotrochozoa</taxon>
        <taxon>Mollusca</taxon>
        <taxon>Gastropoda</taxon>
        <taxon>Heterobranchia</taxon>
        <taxon>Euthyneura</taxon>
        <taxon>Tectipleura</taxon>
        <taxon>Aplysiida</taxon>
        <taxon>Aplysioidea</taxon>
        <taxon>Aplysiidae</taxon>
        <taxon>Aplysia</taxon>
    </lineage>
</organism>
<name>KPC1_APLCA</name>